<gene>
    <name type="primary">ydjO</name>
    <name type="ordered locus">BSU06270</name>
</gene>
<evidence type="ECO:0000269" key="1">
    <source>
    </source>
</evidence>
<comment type="subunit">
    <text evidence="1">Interacts with the RNA polymerase core.</text>
</comment>
<keyword id="KW-1185">Reference proteome</keyword>
<feature type="chain" id="PRO_0000375815" description="Uncharacterized protein YdjO">
    <location>
        <begin position="1"/>
        <end position="69"/>
    </location>
</feature>
<reference key="1">
    <citation type="journal article" date="1997" name="DNA Res.">
        <title>Sequence analysis of the groESL-cotA region of the Bacillus subtilis genome, containing the restriction/modification system genes.</title>
        <authorList>
            <person name="Kasahara Y."/>
            <person name="Nakai S."/>
            <person name="Ogasawara N."/>
            <person name="Yata K."/>
            <person name="Sadaie Y."/>
        </authorList>
    </citation>
    <scope>NUCLEOTIDE SEQUENCE [GENOMIC DNA]</scope>
    <source>
        <strain>168 / Marburg / ATCC 6051 / DSM 10 / JCM 1465 / NBRC 13719 / NCIMB 3610 / NRRL NRS-744 / VKM B-501</strain>
    </source>
</reference>
<reference key="2">
    <citation type="journal article" date="1997" name="Nature">
        <title>The complete genome sequence of the Gram-positive bacterium Bacillus subtilis.</title>
        <authorList>
            <person name="Kunst F."/>
            <person name="Ogasawara N."/>
            <person name="Moszer I."/>
            <person name="Albertini A.M."/>
            <person name="Alloni G."/>
            <person name="Azevedo V."/>
            <person name="Bertero M.G."/>
            <person name="Bessieres P."/>
            <person name="Bolotin A."/>
            <person name="Borchert S."/>
            <person name="Borriss R."/>
            <person name="Boursier L."/>
            <person name="Brans A."/>
            <person name="Braun M."/>
            <person name="Brignell S.C."/>
            <person name="Bron S."/>
            <person name="Brouillet S."/>
            <person name="Bruschi C.V."/>
            <person name="Caldwell B."/>
            <person name="Capuano V."/>
            <person name="Carter N.M."/>
            <person name="Choi S.-K."/>
            <person name="Codani J.-J."/>
            <person name="Connerton I.F."/>
            <person name="Cummings N.J."/>
            <person name="Daniel R.A."/>
            <person name="Denizot F."/>
            <person name="Devine K.M."/>
            <person name="Duesterhoeft A."/>
            <person name="Ehrlich S.D."/>
            <person name="Emmerson P.T."/>
            <person name="Entian K.-D."/>
            <person name="Errington J."/>
            <person name="Fabret C."/>
            <person name="Ferrari E."/>
            <person name="Foulger D."/>
            <person name="Fritz C."/>
            <person name="Fujita M."/>
            <person name="Fujita Y."/>
            <person name="Fuma S."/>
            <person name="Galizzi A."/>
            <person name="Galleron N."/>
            <person name="Ghim S.-Y."/>
            <person name="Glaser P."/>
            <person name="Goffeau A."/>
            <person name="Golightly E.J."/>
            <person name="Grandi G."/>
            <person name="Guiseppi G."/>
            <person name="Guy B.J."/>
            <person name="Haga K."/>
            <person name="Haiech J."/>
            <person name="Harwood C.R."/>
            <person name="Henaut A."/>
            <person name="Hilbert H."/>
            <person name="Holsappel S."/>
            <person name="Hosono S."/>
            <person name="Hullo M.-F."/>
            <person name="Itaya M."/>
            <person name="Jones L.-M."/>
            <person name="Joris B."/>
            <person name="Karamata D."/>
            <person name="Kasahara Y."/>
            <person name="Klaerr-Blanchard M."/>
            <person name="Klein C."/>
            <person name="Kobayashi Y."/>
            <person name="Koetter P."/>
            <person name="Koningstein G."/>
            <person name="Krogh S."/>
            <person name="Kumano M."/>
            <person name="Kurita K."/>
            <person name="Lapidus A."/>
            <person name="Lardinois S."/>
            <person name="Lauber J."/>
            <person name="Lazarevic V."/>
            <person name="Lee S.-M."/>
            <person name="Levine A."/>
            <person name="Liu H."/>
            <person name="Masuda S."/>
            <person name="Mauel C."/>
            <person name="Medigue C."/>
            <person name="Medina N."/>
            <person name="Mellado R.P."/>
            <person name="Mizuno M."/>
            <person name="Moestl D."/>
            <person name="Nakai S."/>
            <person name="Noback M."/>
            <person name="Noone D."/>
            <person name="O'Reilly M."/>
            <person name="Ogawa K."/>
            <person name="Ogiwara A."/>
            <person name="Oudega B."/>
            <person name="Park S.-H."/>
            <person name="Parro V."/>
            <person name="Pohl T.M."/>
            <person name="Portetelle D."/>
            <person name="Porwollik S."/>
            <person name="Prescott A.M."/>
            <person name="Presecan E."/>
            <person name="Pujic P."/>
            <person name="Purnelle B."/>
            <person name="Rapoport G."/>
            <person name="Rey M."/>
            <person name="Reynolds S."/>
            <person name="Rieger M."/>
            <person name="Rivolta C."/>
            <person name="Rocha E."/>
            <person name="Roche B."/>
            <person name="Rose M."/>
            <person name="Sadaie Y."/>
            <person name="Sato T."/>
            <person name="Scanlan E."/>
            <person name="Schleich S."/>
            <person name="Schroeter R."/>
            <person name="Scoffone F."/>
            <person name="Sekiguchi J."/>
            <person name="Sekowska A."/>
            <person name="Seror S.J."/>
            <person name="Serror P."/>
            <person name="Shin B.-S."/>
            <person name="Soldo B."/>
            <person name="Sorokin A."/>
            <person name="Tacconi E."/>
            <person name="Takagi T."/>
            <person name="Takahashi H."/>
            <person name="Takemaru K."/>
            <person name="Takeuchi M."/>
            <person name="Tamakoshi A."/>
            <person name="Tanaka T."/>
            <person name="Terpstra P."/>
            <person name="Tognoni A."/>
            <person name="Tosato V."/>
            <person name="Uchiyama S."/>
            <person name="Vandenbol M."/>
            <person name="Vannier F."/>
            <person name="Vassarotti A."/>
            <person name="Viari A."/>
            <person name="Wambutt R."/>
            <person name="Wedler E."/>
            <person name="Wedler H."/>
            <person name="Weitzenegger T."/>
            <person name="Winters P."/>
            <person name="Wipat A."/>
            <person name="Yamamoto H."/>
            <person name="Yamane K."/>
            <person name="Yasumoto K."/>
            <person name="Yata K."/>
            <person name="Yoshida K."/>
            <person name="Yoshikawa H.-F."/>
            <person name="Zumstein E."/>
            <person name="Yoshikawa H."/>
            <person name="Danchin A."/>
        </authorList>
    </citation>
    <scope>NUCLEOTIDE SEQUENCE [LARGE SCALE GENOMIC DNA]</scope>
    <source>
        <strain>168</strain>
    </source>
</reference>
<reference key="3">
    <citation type="journal article" date="2011" name="Proteomics">
        <title>The dynamic protein partnership of RNA polymerase in Bacillus subtilis.</title>
        <authorList>
            <person name="Delumeau O."/>
            <person name="Lecointe F."/>
            <person name="Muntel J."/>
            <person name="Guillot A."/>
            <person name="Guedon E."/>
            <person name="Monnet V."/>
            <person name="Hecker M."/>
            <person name="Becher D."/>
            <person name="Polard P."/>
            <person name="Noirot P."/>
        </authorList>
    </citation>
    <scope>SUBUNIT</scope>
    <source>
        <strain>168</strain>
    </source>
</reference>
<organism>
    <name type="scientific">Bacillus subtilis (strain 168)</name>
    <dbReference type="NCBI Taxonomy" id="224308"/>
    <lineage>
        <taxon>Bacteria</taxon>
        <taxon>Bacillati</taxon>
        <taxon>Bacillota</taxon>
        <taxon>Bacilli</taxon>
        <taxon>Bacillales</taxon>
        <taxon>Bacillaceae</taxon>
        <taxon>Bacillus</taxon>
    </lineage>
</organism>
<sequence>MSYYNKRNQEPLPKEDVSTWECTKEDCNGWTRKNFASSDTPLCPLCGSKMVDGIRSLVNLQNNSQTKTS</sequence>
<name>YDJO_BACSU</name>
<accession>O34759</accession>
<accession>Q797C0</accession>
<dbReference type="EMBL" id="AB007638">
    <property type="protein sequence ID" value="BAA22771.1"/>
    <property type="molecule type" value="Genomic_DNA"/>
</dbReference>
<dbReference type="EMBL" id="AL009126">
    <property type="protein sequence ID" value="CAB12446.1"/>
    <property type="molecule type" value="Genomic_DNA"/>
</dbReference>
<dbReference type="PIR" id="C69790">
    <property type="entry name" value="C69790"/>
</dbReference>
<dbReference type="RefSeq" id="NP_388508.1">
    <property type="nucleotide sequence ID" value="NC_000964.3"/>
</dbReference>
<dbReference type="RefSeq" id="WP_003234008.1">
    <property type="nucleotide sequence ID" value="NZ_OZ025638.1"/>
</dbReference>
<dbReference type="FunCoup" id="O34759">
    <property type="interactions" value="4"/>
</dbReference>
<dbReference type="STRING" id="224308.BSU06270"/>
<dbReference type="PaxDb" id="224308-BSU06270"/>
<dbReference type="EnsemblBacteria" id="CAB12446">
    <property type="protein sequence ID" value="CAB12446"/>
    <property type="gene ID" value="BSU_06270"/>
</dbReference>
<dbReference type="GeneID" id="936021"/>
<dbReference type="KEGG" id="bsu:BSU06270"/>
<dbReference type="PATRIC" id="fig|224308.179.peg.680"/>
<dbReference type="eggNOG" id="ENOG5032YUY">
    <property type="taxonomic scope" value="Bacteria"/>
</dbReference>
<dbReference type="InParanoid" id="O34759"/>
<dbReference type="OrthoDB" id="1955171at2"/>
<dbReference type="BioCyc" id="BSUB:BSU06270-MONOMER"/>
<dbReference type="Proteomes" id="UP000001570">
    <property type="component" value="Chromosome"/>
</dbReference>
<dbReference type="InterPro" id="IPR025916">
    <property type="entry name" value="YdjO"/>
</dbReference>
<dbReference type="Pfam" id="PF14169">
    <property type="entry name" value="YdjO"/>
    <property type="match status" value="1"/>
</dbReference>
<protein>
    <recommendedName>
        <fullName>Uncharacterized protein YdjO</fullName>
    </recommendedName>
</protein>
<proteinExistence type="evidence at protein level"/>